<organism>
    <name type="scientific">Thermotoga sp. (strain RQ2)</name>
    <dbReference type="NCBI Taxonomy" id="126740"/>
    <lineage>
        <taxon>Bacteria</taxon>
        <taxon>Thermotogati</taxon>
        <taxon>Thermotogota</taxon>
        <taxon>Thermotogae</taxon>
        <taxon>Thermotogales</taxon>
        <taxon>Thermotogaceae</taxon>
        <taxon>Thermotoga</taxon>
    </lineage>
</organism>
<reference key="1">
    <citation type="journal article" date="2011" name="J. Bacteriol.">
        <title>Genome sequence of Thermotoga sp. strain RQ2, a hyperthermophilic bacterium isolated from a geothermally heated region of the seafloor near Ribeira Quente, the Azores.</title>
        <authorList>
            <person name="Swithers K.S."/>
            <person name="DiPippo J.L."/>
            <person name="Bruce D.C."/>
            <person name="Detter C."/>
            <person name="Tapia R."/>
            <person name="Han S."/>
            <person name="Saunders E."/>
            <person name="Goodwin L.A."/>
            <person name="Han J."/>
            <person name="Woyke T."/>
            <person name="Pitluck S."/>
            <person name="Pennacchio L."/>
            <person name="Nolan M."/>
            <person name="Mikhailova N."/>
            <person name="Lykidis A."/>
            <person name="Land M.L."/>
            <person name="Brettin T."/>
            <person name="Stetter K.O."/>
            <person name="Nelson K.E."/>
            <person name="Gogarten J.P."/>
            <person name="Noll K.M."/>
        </authorList>
    </citation>
    <scope>NUCLEOTIDE SEQUENCE [LARGE SCALE GENOMIC DNA]</scope>
    <source>
        <strain>RQ2</strain>
    </source>
</reference>
<dbReference type="EMBL" id="CP000969">
    <property type="protein sequence ID" value="ACB09546.1"/>
    <property type="molecule type" value="Genomic_DNA"/>
</dbReference>
<dbReference type="RefSeq" id="WP_011943753.1">
    <property type="nucleotide sequence ID" value="NC_010483.1"/>
</dbReference>
<dbReference type="SMR" id="B1LB48"/>
<dbReference type="KEGG" id="trq:TRQ2_1202"/>
<dbReference type="HOGENOM" id="CLU_045235_1_0_0"/>
<dbReference type="Proteomes" id="UP000001687">
    <property type="component" value="Chromosome"/>
</dbReference>
<dbReference type="GO" id="GO:0009428">
    <property type="term" value="C:bacterial-type flagellum basal body, distal rod, P ring"/>
    <property type="evidence" value="ECO:0007669"/>
    <property type="project" value="InterPro"/>
</dbReference>
<dbReference type="GO" id="GO:0030288">
    <property type="term" value="C:outer membrane-bounded periplasmic space"/>
    <property type="evidence" value="ECO:0007669"/>
    <property type="project" value="InterPro"/>
</dbReference>
<dbReference type="GO" id="GO:0005198">
    <property type="term" value="F:structural molecule activity"/>
    <property type="evidence" value="ECO:0007669"/>
    <property type="project" value="InterPro"/>
</dbReference>
<dbReference type="GO" id="GO:0071973">
    <property type="term" value="P:bacterial-type flagellum-dependent cell motility"/>
    <property type="evidence" value="ECO:0007669"/>
    <property type="project" value="InterPro"/>
</dbReference>
<dbReference type="HAMAP" id="MF_00416">
    <property type="entry name" value="FlgI"/>
    <property type="match status" value="1"/>
</dbReference>
<dbReference type="InterPro" id="IPR001782">
    <property type="entry name" value="Flag_FlgI"/>
</dbReference>
<dbReference type="NCBIfam" id="NF003676">
    <property type="entry name" value="PRK05303.1"/>
    <property type="match status" value="1"/>
</dbReference>
<dbReference type="PANTHER" id="PTHR30381">
    <property type="entry name" value="FLAGELLAR P-RING PERIPLASMIC PROTEIN FLGI"/>
    <property type="match status" value="1"/>
</dbReference>
<dbReference type="PANTHER" id="PTHR30381:SF0">
    <property type="entry name" value="FLAGELLAR P-RING PROTEIN"/>
    <property type="match status" value="1"/>
</dbReference>
<dbReference type="Pfam" id="PF02119">
    <property type="entry name" value="FlgI"/>
    <property type="match status" value="2"/>
</dbReference>
<dbReference type="PRINTS" id="PR01010">
    <property type="entry name" value="FLGPRINGFLGI"/>
</dbReference>
<gene>
    <name evidence="1" type="primary">flgI</name>
    <name type="ordered locus">TRQ2_1202</name>
</gene>
<name>FLGI_THESQ</name>
<evidence type="ECO:0000255" key="1">
    <source>
        <dbReference type="HAMAP-Rule" id="MF_00416"/>
    </source>
</evidence>
<keyword id="KW-0975">Bacterial flagellum</keyword>
<keyword id="KW-0574">Periplasm</keyword>
<keyword id="KW-0732">Signal</keyword>
<accession>B1LB48</accession>
<sequence length="331" mass="35432">MKKRLAVLLVIVLTITFSFSVTTRIKDIAFFRGARDNQLFGIGLVVGLNGTGDSGNVNSPLLLEMMKKFGVQVSENDLKSKNTALVMVLADIPPFAKEGMRIDCVVASIADAKSLAGGYLLQTPLYGADGKVYAVAQGSVIIGGEDVKLSSNLQKRYRVVGYLPEGAIVERDIPSDMLDGDSVTILLRQPDITTAARVARAINEKFEMDLAKAIDPSAIKLTVPNAFQDDLITFLSLVEEIEVQPDVPARIVVNERTGTVLFGGDVKLSDFVISYGNFTISVTGGKIGDKDATISNLVSALKAAGATPQDIIAILQVIYESGYITGELIIM</sequence>
<protein>
    <recommendedName>
        <fullName evidence="1">Flagellar P-ring protein</fullName>
    </recommendedName>
    <alternativeName>
        <fullName evidence="1">Basal body P-ring protein</fullName>
    </alternativeName>
</protein>
<comment type="function">
    <text evidence="1">Assembles around the rod to form the L-ring and probably protects the motor/basal body from shearing forces during rotation.</text>
</comment>
<comment type="subunit">
    <text evidence="1">The basal body constitutes a major portion of the flagellar organelle and consists of four rings (L,P,S, and M) mounted on a central rod.</text>
</comment>
<comment type="subcellular location">
    <subcellularLocation>
        <location evidence="1">Periplasm</location>
    </subcellularLocation>
    <subcellularLocation>
        <location evidence="1">Bacterial flagellum basal body</location>
    </subcellularLocation>
</comment>
<comment type="similarity">
    <text evidence="1">Belongs to the FlgI family.</text>
</comment>
<feature type="signal peptide" evidence="1">
    <location>
        <begin position="1"/>
        <end position="25"/>
    </location>
</feature>
<feature type="chain" id="PRO_1000123984" description="Flagellar P-ring protein">
    <location>
        <begin position="26"/>
        <end position="331"/>
    </location>
</feature>
<proteinExistence type="inferred from homology"/>